<accession>A0A0X1KHF9</accession>
<dbReference type="EC" id="2.7.9.6" evidence="1 2 3"/>
<dbReference type="EMBL" id="AE017262">
    <property type="protein sequence ID" value="AAT03214.1"/>
    <property type="molecule type" value="Genomic_DNA"/>
</dbReference>
<dbReference type="PDB" id="5FBS">
    <property type="method" value="X-ray"/>
    <property type="resolution" value="2.59 A"/>
    <property type="chains" value="A=1-867"/>
</dbReference>
<dbReference type="PDB" id="5FBT">
    <property type="method" value="X-ray"/>
    <property type="resolution" value="2.70 A"/>
    <property type="chains" value="A=1-867"/>
</dbReference>
<dbReference type="PDB" id="5FBU">
    <property type="method" value="X-ray"/>
    <property type="resolution" value="2.85 A"/>
    <property type="chains" value="A=1-867"/>
</dbReference>
<dbReference type="PDB" id="5HV1">
    <property type="method" value="X-ray"/>
    <property type="resolution" value="3.10 A"/>
    <property type="chains" value="A=1-867"/>
</dbReference>
<dbReference type="PDB" id="5HV2">
    <property type="method" value="X-ray"/>
    <property type="resolution" value="2.91 A"/>
    <property type="chains" value="A=1-867"/>
</dbReference>
<dbReference type="PDB" id="5HV3">
    <property type="method" value="X-ray"/>
    <property type="resolution" value="3.12 A"/>
    <property type="chains" value="A=1-867"/>
</dbReference>
<dbReference type="PDB" id="5HV6">
    <property type="method" value="X-ray"/>
    <property type="resolution" value="3.00 A"/>
    <property type="chains" value="A/B=1-315"/>
</dbReference>
<dbReference type="PDBsum" id="5FBS"/>
<dbReference type="PDBsum" id="5FBT"/>
<dbReference type="PDBsum" id="5FBU"/>
<dbReference type="PDBsum" id="5HV1"/>
<dbReference type="PDBsum" id="5HV2"/>
<dbReference type="PDBsum" id="5HV3"/>
<dbReference type="PDBsum" id="5HV6"/>
<dbReference type="SMR" id="A0A0X1KHF9"/>
<dbReference type="KEGG" id="lmf:LMOf2365_0430"/>
<dbReference type="BioCyc" id="MetaCyc:MONOMER-20247"/>
<dbReference type="GO" id="GO:0005524">
    <property type="term" value="F:ATP binding"/>
    <property type="evidence" value="ECO:0007669"/>
    <property type="project" value="UniProtKB-KW"/>
</dbReference>
<dbReference type="GO" id="GO:0016301">
    <property type="term" value="F:kinase activity"/>
    <property type="evidence" value="ECO:0007669"/>
    <property type="project" value="UniProtKB-KW"/>
</dbReference>
<dbReference type="GO" id="GO:0046677">
    <property type="term" value="P:response to antibiotic"/>
    <property type="evidence" value="ECO:0007669"/>
    <property type="project" value="UniProtKB-KW"/>
</dbReference>
<dbReference type="FunFam" id="3.30.1490.20:FF:000010">
    <property type="entry name" value="Phosphoenolpyruvate synthase"/>
    <property type="match status" value="1"/>
</dbReference>
<dbReference type="FunFam" id="3.50.30.10:FF:000007">
    <property type="entry name" value="Phosphoenolpyruvate synthase"/>
    <property type="match status" value="1"/>
</dbReference>
<dbReference type="Gene3D" id="3.30.1490.20">
    <property type="entry name" value="ATP-grasp fold, A domain"/>
    <property type="match status" value="1"/>
</dbReference>
<dbReference type="Gene3D" id="3.30.470.20">
    <property type="entry name" value="ATP-grasp fold, B domain"/>
    <property type="match status" value="1"/>
</dbReference>
<dbReference type="Gene3D" id="3.50.30.10">
    <property type="entry name" value="Phosphohistidine domain"/>
    <property type="match status" value="1"/>
</dbReference>
<dbReference type="InterPro" id="IPR013815">
    <property type="entry name" value="ATP_grasp_subdomain_1"/>
</dbReference>
<dbReference type="InterPro" id="IPR008279">
    <property type="entry name" value="PEP-util_enz_mobile_dom"/>
</dbReference>
<dbReference type="InterPro" id="IPR051549">
    <property type="entry name" value="PEP_Utilizing_Enz"/>
</dbReference>
<dbReference type="InterPro" id="IPR036637">
    <property type="entry name" value="Phosphohistidine_dom_sf"/>
</dbReference>
<dbReference type="InterPro" id="IPR002192">
    <property type="entry name" value="PPDK_AMP/ATP-bd"/>
</dbReference>
<dbReference type="NCBIfam" id="NF004877">
    <property type="entry name" value="PRK06241.1-2"/>
    <property type="match status" value="1"/>
</dbReference>
<dbReference type="NCBIfam" id="NF004878">
    <property type="entry name" value="PRK06241.1-3"/>
    <property type="match status" value="1"/>
</dbReference>
<dbReference type="NCBIfam" id="NF004879">
    <property type="entry name" value="PRK06241.1-4"/>
    <property type="match status" value="1"/>
</dbReference>
<dbReference type="NCBIfam" id="NF041857">
    <property type="entry name" value="RIF_Ptrans_rph"/>
    <property type="match status" value="1"/>
</dbReference>
<dbReference type="PANTHER" id="PTHR43615">
    <property type="entry name" value="PHOSPHOENOLPYRUVATE SYNTHASE-RELATED"/>
    <property type="match status" value="1"/>
</dbReference>
<dbReference type="PANTHER" id="PTHR43615:SF1">
    <property type="entry name" value="PPDK_N DOMAIN-CONTAINING PROTEIN"/>
    <property type="match status" value="1"/>
</dbReference>
<dbReference type="Pfam" id="PF00391">
    <property type="entry name" value="PEP-utilizers"/>
    <property type="match status" value="1"/>
</dbReference>
<dbReference type="Pfam" id="PF01326">
    <property type="entry name" value="PPDK_N"/>
    <property type="match status" value="1"/>
</dbReference>
<dbReference type="SUPFAM" id="SSF56059">
    <property type="entry name" value="Glutathione synthetase ATP-binding domain-like"/>
    <property type="match status" value="1"/>
</dbReference>
<dbReference type="SUPFAM" id="SSF52009">
    <property type="entry name" value="Phosphohistidine domain"/>
    <property type="match status" value="1"/>
</dbReference>
<evidence type="ECO:0000269" key="1">
    <source>
    </source>
</evidence>
<evidence type="ECO:0000269" key="2">
    <source>
    </source>
</evidence>
<evidence type="ECO:0000269" key="3">
    <source>
    </source>
</evidence>
<evidence type="ECO:0000303" key="4">
    <source>
    </source>
</evidence>
<evidence type="ECO:0000303" key="5">
    <source>
    </source>
</evidence>
<evidence type="ECO:0000305" key="6"/>
<evidence type="ECO:0000305" key="7">
    <source>
    </source>
</evidence>
<evidence type="ECO:0000305" key="8">
    <source>
    </source>
</evidence>
<evidence type="ECO:0000312" key="9">
    <source>
        <dbReference type="PDB" id="5FBT"/>
    </source>
</evidence>
<evidence type="ECO:0000312" key="10">
    <source>
        <dbReference type="PDB" id="5FBU"/>
    </source>
</evidence>
<evidence type="ECO:0000312" key="11">
    <source>
        <dbReference type="PDB" id="5HV1"/>
    </source>
</evidence>
<evidence type="ECO:0007744" key="12">
    <source>
        <dbReference type="PDB" id="5FBS"/>
    </source>
</evidence>
<evidence type="ECO:0007744" key="13">
    <source>
        <dbReference type="PDB" id="5FBT"/>
    </source>
</evidence>
<evidence type="ECO:0007744" key="14">
    <source>
        <dbReference type="PDB" id="5FBU"/>
    </source>
</evidence>
<evidence type="ECO:0007744" key="15">
    <source>
        <dbReference type="PDB" id="5HV1"/>
    </source>
</evidence>
<evidence type="ECO:0007744" key="16">
    <source>
        <dbReference type="PDB" id="5HV2"/>
    </source>
</evidence>
<evidence type="ECO:0007744" key="17">
    <source>
        <dbReference type="PDB" id="5HV3"/>
    </source>
</evidence>
<evidence type="ECO:0007744" key="18">
    <source>
        <dbReference type="PDB" id="5HV6"/>
    </source>
</evidence>
<evidence type="ECO:0007829" key="19">
    <source>
        <dbReference type="PDB" id="5FBT"/>
    </source>
</evidence>
<evidence type="ECO:0007829" key="20">
    <source>
        <dbReference type="PDB" id="5FBU"/>
    </source>
</evidence>
<organism>
    <name type="scientific">Listeria monocytogenes serotype 4b (strain F2365)</name>
    <dbReference type="NCBI Taxonomy" id="265669"/>
    <lineage>
        <taxon>Bacteria</taxon>
        <taxon>Bacillati</taxon>
        <taxon>Bacillota</taxon>
        <taxon>Bacilli</taxon>
        <taxon>Bacillales</taxon>
        <taxon>Listeriaceae</taxon>
        <taxon>Listeria</taxon>
    </lineage>
</organism>
<sequence>MKPYVLKFQEIRPHSEALVGGKGMNLGACSNIEGVHVPAGFCLTTEAYKRTLAENNEFTQLLQRLSSLKTSDMDAIREISETIRTLIQHTQIPSEIASYMDATLLDVGGYEMPFAVRSSATAEDLPHASFAGQHDTYLNIIGKDALLQHISMCWASLFTERAIIYRIQNQFDHRKVQLAVVIQQMISPEASGILFTADPITSNRKSLSIDASFGLGEALVSGLVSADSYTVRENTITNKIIATKKLAIYSLKEGGTETRILEKSQQTKQTLTDQQIIQLAKLGRKIEAYFGKPQDIEWCLAEGAFYIVQSRPITTLYPIPEVNEPGNRVYISVAHQQMMTDAMKPLGLSFYLMTTPATMYTAGGRLFVDITQSLSAKVSRDMMVNSLGQSDPLIKDALLTVINKKGFLPPLPTEENPSHATVSGKPPVRSIPDSSSVFELVRNSENSIKHLKQSIETKSGSDLFDFIVEDLEELKRVLFNPTSIDAIMAGMDASAWLNEHIYQWLGEKNVADKLSESAPNNITSQMGLELLDVADVIRPYPAVRAYLEQTKNPDFMNELATLEGGAETKKALEDYLQKYGMRCAGEIDLTKTRWIENPLTLIPLILSNIKNFDSGASMHKFAQGEKEAFHKEQEILRRLQELPDGEQKAMETKEKIDILRHFIGYREYPKYGMINRYFIYKLALLRAGEQLVKDGILQEQEDIYFLYFEELREVVRTGQVDYELINVRKRDFATFEKLTPPRILTSDGEMINGEYKRENLPKDAILGLPVSSGTVEGRARVILDMEKADLEDGDILVTAYTDPSWTPAFVSIKGLVTEVGGLMTHGAVIAREYGLPAVVGVENATTIIKDGQQIRINGTEGYIEILD</sequence>
<reference key="1">
    <citation type="journal article" date="2004" name="Nucleic Acids Res.">
        <title>Whole genome comparisons of serotype 4b and 1/2a strains of the food-borne pathogen Listeria monocytogenes reveal new insights into the core genome components of this species.</title>
        <authorList>
            <person name="Nelson K.E."/>
            <person name="Fouts D.E."/>
            <person name="Mongodin E.F."/>
            <person name="Ravel J."/>
            <person name="DeBoy R.T."/>
            <person name="Kolonay J.F."/>
            <person name="Rasko D.A."/>
            <person name="Angiuoli S.V."/>
            <person name="Gill S.R."/>
            <person name="Paulsen I.T."/>
            <person name="Peterson J.D."/>
            <person name="White O."/>
            <person name="Nelson W.C."/>
            <person name="Nierman W.C."/>
            <person name="Beanan M.J."/>
            <person name="Brinkac L.M."/>
            <person name="Daugherty S.C."/>
            <person name="Dodson R.J."/>
            <person name="Durkin A.S."/>
            <person name="Madupu R."/>
            <person name="Haft D.H."/>
            <person name="Selengut J."/>
            <person name="Van Aken S.E."/>
            <person name="Khouri H.M."/>
            <person name="Fedorova N."/>
            <person name="Forberger H.A."/>
            <person name="Tran B."/>
            <person name="Kathariou S."/>
            <person name="Wonderling L.D."/>
            <person name="Uhlich G.A."/>
            <person name="Bayles D.O."/>
            <person name="Luchansky J.B."/>
            <person name="Fraser C.M."/>
        </authorList>
    </citation>
    <scope>NUCLEOTIDE SEQUENCE [LARGE SCALE GENOMIC DNA]</scope>
    <source>
        <strain>F2365</strain>
    </source>
</reference>
<reference key="2">
    <citation type="journal article" date="2014" name="Proc. Natl. Acad. Sci. U.S.A.">
        <title>A rifamycin inactivating phosphotransferase family shared by environmental and pathogenic bacteria.</title>
        <authorList>
            <person name="Spanogiannopoulos P."/>
            <person name="Waglechner N."/>
            <person name="Koteva K."/>
            <person name="Wright G.D."/>
        </authorList>
    </citation>
    <scope>FUNCTION</scope>
    <scope>CATALYTIC ACTIVITY</scope>
    <scope>BIOPHYSICOCHEMICAL PROPERTIES</scope>
    <source>
        <strain>F2365</strain>
    </source>
</reference>
<reference evidence="12 13 14" key="3">
    <citation type="journal article" date="2016" name="Nat. Commun.">
        <title>Rifampin phosphotransferase is an unusual antibiotic resistance kinase.</title>
        <authorList>
            <person name="Stogios P.J."/>
            <person name="Cox G."/>
            <person name="Spanogiannopoulos P."/>
            <person name="Pillon M.C."/>
            <person name="Waglechner N."/>
            <person name="Skarina T."/>
            <person name="Koteva K."/>
            <person name="Guarne A."/>
            <person name="Savchenko A."/>
            <person name="Wright G.D."/>
        </authorList>
    </citation>
    <scope>X-RAY CRYSTALLOGRAPHY (2.59 ANGSTROMS) IN COMPLEXES WITH ADP; RIFAMPICIN AND MAGNESIUM</scope>
    <scope>FUNCTION</scope>
    <scope>CATALYTIC ACTIVITY</scope>
    <scope>REACTION MECHANISM</scope>
    <scope>BIOPHYSICOCHEMICAL PROPERTIES</scope>
    <scope>DOMAIN</scope>
    <scope>ACTIVE SITE</scope>
    <scope>MUTAGENESIS OF LYS-22; ARG-117; THR-136; GLU-297; GLN-337; TYR-351; VAL-368; ARG-666 AND GLU-667</scope>
    <source>
        <strain>F2365</strain>
    </source>
</reference>
<reference evidence="15 16 17 18" key="4">
    <citation type="journal article" date="2016" name="Proc. Natl. Acad. Sci. U.S.A.">
        <title>Structural basis of rifampin inactivation by rifampin phosphotransferase.</title>
        <authorList>
            <person name="Qi X."/>
            <person name="Lin W."/>
            <person name="Ma M."/>
            <person name="Wang C."/>
            <person name="He Y."/>
            <person name="He N."/>
            <person name="Gao J."/>
            <person name="Zhou H."/>
            <person name="Xiao Y."/>
            <person name="Wang Y."/>
            <person name="Zhang P."/>
        </authorList>
    </citation>
    <scope>X-RAY CRYSTALLOGRAPHY (2.91 ANGSTROMS) OF WILD-TYPE IN COMPLEX WITH ATP ANALOG; RIFAMPICIN AND MAGNESIUM AND OF MUTANT TYR-527</scope>
    <scope>FUNCTION</scope>
    <scope>CATALYTIC ACTIVITY</scope>
    <scope>REACTION MECHANISM</scope>
    <scope>DOMAIN</scope>
    <scope>ACTIVE SITE</scope>
    <scope>MUTAGENESIS OF LYS-22; ARG-117; THR-136; GLN-183; GLU-297; GLN-309; ARG-311; VAL-333; GLN-337; PRO-356; VAL-368; MET-383; PHE-479; GLY-527; ARG-666; LYS-670; MET-673 AND HIS-825</scope>
</reference>
<gene>
    <name evidence="4" type="primary">rph</name>
    <name evidence="4" type="synonym">rph-Lm</name>
    <name type="ordered locus">LMOf2365_0430</name>
    <name evidence="9 10" type="ORF">LmNIHS28_01948</name>
</gene>
<keyword id="KW-0002">3D-structure</keyword>
<keyword id="KW-0046">Antibiotic resistance</keyword>
<keyword id="KW-0067">ATP-binding</keyword>
<keyword id="KW-0418">Kinase</keyword>
<keyword id="KW-0547">Nucleotide-binding</keyword>
<keyword id="KW-0808">Transferase</keyword>
<feature type="chain" id="PRO_0000459647" description="Rifampicin phosphotransferase">
    <location>
        <begin position="1"/>
        <end position="867"/>
    </location>
</feature>
<feature type="region of interest" description="ATP-binding" evidence="8">
    <location>
        <begin position="1"/>
        <end position="314"/>
    </location>
</feature>
<feature type="region of interest" description="Rifampicin-binding" evidence="8">
    <location>
        <begin position="327"/>
        <end position="754"/>
    </location>
</feature>
<feature type="region of interest" description="Swivel phosphohistidine" evidence="8">
    <location>
        <begin position="767"/>
        <end position="865"/>
    </location>
</feature>
<feature type="active site" description="Tele-phosphohistidine intermediate" evidence="3 7">
    <location>
        <position position="825"/>
    </location>
</feature>
<feature type="binding site" evidence="7 8 11 12">
    <location>
        <position position="22"/>
    </location>
    <ligand>
        <name>ATP</name>
        <dbReference type="ChEBI" id="CHEBI:30616"/>
    </ligand>
</feature>
<feature type="binding site" evidence="7 8 11 12">
    <location>
        <position position="117"/>
    </location>
    <ligand>
        <name>ATP</name>
        <dbReference type="ChEBI" id="CHEBI:30616"/>
    </ligand>
</feature>
<feature type="binding site" evidence="7 11">
    <location>
        <position position="132"/>
    </location>
    <ligand>
        <name>ATP</name>
        <dbReference type="ChEBI" id="CHEBI:30616"/>
    </ligand>
</feature>
<feature type="binding site" evidence="7 8 11 12">
    <location>
        <position position="136"/>
    </location>
    <ligand>
        <name>ATP</name>
        <dbReference type="ChEBI" id="CHEBI:30616"/>
    </ligand>
</feature>
<feature type="binding site" evidence="7 11">
    <location>
        <position position="183"/>
    </location>
    <ligand>
        <name>ATP</name>
        <dbReference type="ChEBI" id="CHEBI:30616"/>
    </ligand>
</feature>
<feature type="binding site" evidence="7 11">
    <location>
        <position position="297"/>
    </location>
    <ligand>
        <name>ATP</name>
        <dbReference type="ChEBI" id="CHEBI:30616"/>
    </ligand>
</feature>
<feature type="binding site" evidence="7 11">
    <location>
        <position position="309"/>
    </location>
    <ligand>
        <name>ATP</name>
        <dbReference type="ChEBI" id="CHEBI:30616"/>
    </ligand>
</feature>
<feature type="binding site" evidence="7 11">
    <location>
        <position position="311"/>
    </location>
    <ligand>
        <name>ATP</name>
        <dbReference type="ChEBI" id="CHEBI:30616"/>
    </ligand>
</feature>
<feature type="binding site" evidence="3">
    <location>
        <position position="336"/>
    </location>
    <ligand>
        <name>rifampicin</name>
        <dbReference type="ChEBI" id="CHEBI:71365"/>
    </ligand>
</feature>
<feature type="binding site" evidence="3">
    <location>
        <position position="351"/>
    </location>
    <ligand>
        <name>rifampicin</name>
        <dbReference type="ChEBI" id="CHEBI:71365"/>
    </ligand>
</feature>
<feature type="mutagenesis site" description="Loss of activity." evidence="2 3">
    <original>K</original>
    <variation>A</variation>
    <location>
        <position position="22"/>
    </location>
</feature>
<feature type="mutagenesis site" description="Abolishes RIF-phosphorylation activity. Retains ATP pyrophosphatase activity in vitro but cannot phosphorylate RIF." evidence="2 3">
    <original>R</original>
    <variation>A</variation>
    <location>
        <position position="117"/>
    </location>
</feature>
<feature type="mutagenesis site" description="Strong decrease in RIF-phosphorylation activity." evidence="2">
    <original>T</original>
    <variation>A</variation>
    <location>
        <position position="136"/>
    </location>
</feature>
<feature type="mutagenesis site" description="Retains ATP pyrophosphatase activity in vitro but cannot phosphorylate RIF." evidence="3">
    <original>T</original>
    <variation>V</variation>
    <location>
        <position position="136"/>
    </location>
</feature>
<feature type="mutagenesis site" description="Slight decrease in RIF-phosphorylation activity." evidence="2">
    <original>Q</original>
    <variation>A</variation>
    <location>
        <position position="183"/>
    </location>
</feature>
<feature type="mutagenesis site" description="According to PubMed:27001859, abolishes RIF-phosphorylation activity. According to PubMed:27103605, has no effect on RIF resistance in vivo and does not affect phosphatase activity in vitro." evidence="2 3">
    <original>E</original>
    <variation>A</variation>
    <location>
        <position position="297"/>
    </location>
</feature>
<feature type="mutagenesis site" description="Strong decrease in RIF-phosphorylation activity." evidence="2">
    <original>Q</original>
    <variation>A</variation>
    <location>
        <position position="309"/>
    </location>
</feature>
<feature type="mutagenesis site" description="Strong decrease in RIF-phosphorylation activity." evidence="2">
    <original>R</original>
    <variation>A</variation>
    <location>
        <position position="311"/>
    </location>
</feature>
<feature type="mutagenesis site" description="Decrease in RIF-phosphorylation activity." evidence="2">
    <original>V</original>
    <variation>A</variation>
    <location>
        <position position="333"/>
    </location>
</feature>
<feature type="mutagenesis site" description="Almost abolishes RIF-phosphorylation activity." evidence="2">
    <original>V</original>
    <variation>W</variation>
    <location>
        <position position="333"/>
    </location>
</feature>
<feature type="mutagenesis site" description="Strong decrease in RIF-phosphorylation activity. 4-fold decrease in RIF resistance." evidence="2 3">
    <original>Q</original>
    <variation>A</variation>
    <location>
        <position position="337"/>
    </location>
</feature>
<feature type="mutagenesis site" description="Does not affect activity." evidence="3">
    <original>Y</original>
    <variation>F</variation>
    <location>
        <position position="351"/>
    </location>
</feature>
<feature type="mutagenesis site" description="Has only minor effects on RIF-phosphorylation activity." evidence="2">
    <original>P</original>
    <variation>A</variation>
    <location>
        <position position="356"/>
    </location>
</feature>
<feature type="mutagenesis site" description="Decrease in RIF-phosphorylation activity." evidence="2">
    <original>V</original>
    <variation>A</variation>
    <location>
        <position position="368"/>
    </location>
</feature>
<feature type="mutagenesis site" description="2-fold decrease in RIF resistance. 10-fold increase in the catalytic efficiency for ATP." evidence="3">
    <original>V</original>
    <variation>E</variation>
    <location>
        <position position="368"/>
    </location>
</feature>
<feature type="mutagenesis site" description="4-fold decrease in RIF resistance. 10-fold increase in the catalytic efficiency for ATP." evidence="3">
    <original>V</original>
    <variation>T</variation>
    <location>
        <position position="368"/>
    </location>
</feature>
<feature type="mutagenesis site" description="Almost abolishes RIF-phosphorylation activity." evidence="2">
    <original>V</original>
    <variation>W</variation>
    <location>
        <position position="368"/>
    </location>
</feature>
<feature type="mutagenesis site" description="Decrease in RIF-phosphorylation activity." evidence="2">
    <original>M</original>
    <variation>A</variation>
    <location>
        <position position="383"/>
    </location>
</feature>
<feature type="mutagenesis site" description="Has only minor effects on RIF-phosphorylation activity." evidence="2">
    <original>F</original>
    <variation>A</variation>
    <location>
        <position position="479"/>
    </location>
</feature>
<feature type="mutagenesis site" description="Decrease in RIF-phosphorylation activity." evidence="2">
    <original>G</original>
    <variation>A</variation>
    <location>
        <position position="527"/>
    </location>
</feature>
<feature type="mutagenesis site" description="Almost abolishes RIF-phosphorylation activity." evidence="2">
    <original>G</original>
    <variation>S</variation>
    <location>
        <position position="527"/>
    </location>
</feature>
<feature type="mutagenesis site" description="Almost abolishes RIF-phosphorylation activity. Increases the ATP-binding affinity." evidence="2">
    <original>G</original>
    <variation>Y</variation>
    <location>
        <position position="527"/>
    </location>
</feature>
<feature type="mutagenesis site" description="Loss of RIF-phosphorylation activity." evidence="2 3">
    <original>R</original>
    <variation>A</variation>
    <location>
        <position position="666"/>
    </location>
</feature>
<feature type="mutagenesis site" description="Loss of RIF-phosphorylation activity." evidence="3">
    <original>E</original>
    <variation>A</variation>
    <location>
        <position position="667"/>
    </location>
</feature>
<feature type="mutagenesis site" description="Loss of RIF-phosphorylation activity." evidence="2">
    <original>K</original>
    <variation>A</variation>
    <location>
        <position position="670"/>
    </location>
</feature>
<feature type="mutagenesis site" description="Decrease in RIF-phosphorylation activity." evidence="2">
    <original>M</original>
    <variation>A</variation>
    <location>
        <position position="673"/>
    </location>
</feature>
<feature type="mutagenesis site" description="Loss of RIF-phosphorylation activity. Cannot be phosphorylated in the presence of ATP." evidence="2">
    <original>H</original>
    <variation>A</variation>
    <location>
        <position position="825"/>
    </location>
</feature>
<feature type="strand" evidence="19">
    <location>
        <begin position="4"/>
        <end position="7"/>
    </location>
</feature>
<feature type="turn" evidence="19">
    <location>
        <begin position="8"/>
        <end position="10"/>
    </location>
</feature>
<feature type="helix" evidence="19">
    <location>
        <begin position="16"/>
        <end position="27"/>
    </location>
</feature>
<feature type="strand" evidence="19">
    <location>
        <begin position="30"/>
        <end position="34"/>
    </location>
</feature>
<feature type="strand" evidence="19">
    <location>
        <begin position="41"/>
        <end position="43"/>
    </location>
</feature>
<feature type="helix" evidence="19">
    <location>
        <begin position="45"/>
        <end position="47"/>
    </location>
</feature>
<feature type="helix" evidence="20">
    <location>
        <begin position="49"/>
        <end position="51"/>
    </location>
</feature>
<feature type="helix" evidence="19">
    <location>
        <begin position="58"/>
        <end position="63"/>
    </location>
</feature>
<feature type="helix" evidence="19">
    <location>
        <begin position="76"/>
        <end position="79"/>
    </location>
</feature>
<feature type="helix" evidence="19">
    <location>
        <begin position="80"/>
        <end position="82"/>
    </location>
</feature>
<feature type="helix" evidence="19">
    <location>
        <begin position="83"/>
        <end position="89"/>
    </location>
</feature>
<feature type="helix" evidence="19">
    <location>
        <begin position="96"/>
        <end position="99"/>
    </location>
</feature>
<feature type="helix" evidence="19">
    <location>
        <begin position="100"/>
        <end position="102"/>
    </location>
</feature>
<feature type="helix" evidence="19">
    <location>
        <begin position="148"/>
        <end position="154"/>
    </location>
</feature>
<feature type="helix" evidence="19">
    <location>
        <begin position="155"/>
        <end position="157"/>
    </location>
</feature>
<feature type="strand" evidence="19">
    <location>
        <begin position="189"/>
        <end position="197"/>
    </location>
</feature>
<feature type="turn" evidence="19">
    <location>
        <begin position="199"/>
        <end position="201"/>
    </location>
</feature>
<feature type="strand" evidence="19">
    <location>
        <begin position="207"/>
        <end position="214"/>
    </location>
</feature>
<feature type="strand" evidence="19">
    <location>
        <begin position="227"/>
        <end position="234"/>
    </location>
</feature>
<feature type="strand" evidence="19">
    <location>
        <begin position="236"/>
        <end position="240"/>
    </location>
</feature>
<feature type="helix" evidence="19">
    <location>
        <begin position="265"/>
        <end position="267"/>
    </location>
</feature>
<feature type="helix" evidence="19">
    <location>
        <begin position="273"/>
        <end position="290"/>
    </location>
</feature>
<feature type="strand" evidence="19">
    <location>
        <begin position="294"/>
        <end position="301"/>
    </location>
</feature>
<feature type="strand" evidence="19">
    <location>
        <begin position="304"/>
        <end position="312"/>
    </location>
</feature>
<feature type="strand" evidence="19">
    <location>
        <begin position="324"/>
        <end position="326"/>
    </location>
</feature>
<feature type="strand" evidence="19">
    <location>
        <begin position="329"/>
        <end position="332"/>
    </location>
</feature>
<feature type="helix" evidence="19">
    <location>
        <begin position="333"/>
        <end position="337"/>
    </location>
</feature>
<feature type="helix" evidence="19">
    <location>
        <begin position="345"/>
        <end position="352"/>
    </location>
</feature>
<feature type="strand" evidence="19">
    <location>
        <begin position="359"/>
        <end position="362"/>
    </location>
</feature>
<feature type="strand" evidence="19">
    <location>
        <begin position="365"/>
        <end position="369"/>
    </location>
</feature>
<feature type="helix" evidence="19">
    <location>
        <begin position="372"/>
        <end position="375"/>
    </location>
</feature>
<feature type="helix" evidence="19">
    <location>
        <begin position="377"/>
        <end position="388"/>
    </location>
</feature>
<feature type="helix" evidence="19">
    <location>
        <begin position="392"/>
        <end position="402"/>
    </location>
</feature>
<feature type="turn" evidence="19">
    <location>
        <begin position="405"/>
        <end position="407"/>
    </location>
</feature>
<feature type="helix" evidence="19">
    <location>
        <begin position="436"/>
        <end position="455"/>
    </location>
</feature>
<feature type="helix" evidence="19">
    <location>
        <begin position="461"/>
        <end position="478"/>
    </location>
</feature>
<feature type="helix" evidence="19">
    <location>
        <begin position="481"/>
        <end position="504"/>
    </location>
</feature>
<feature type="turn" evidence="19">
    <location>
        <begin position="508"/>
        <end position="510"/>
    </location>
</feature>
<feature type="helix" evidence="19">
    <location>
        <begin position="511"/>
        <end position="514"/>
    </location>
</feature>
<feature type="turn" evidence="19">
    <location>
        <begin position="515"/>
        <end position="517"/>
    </location>
</feature>
<feature type="helix" evidence="19">
    <location>
        <begin position="522"/>
        <end position="537"/>
    </location>
</feature>
<feature type="helix" evidence="19">
    <location>
        <begin position="541"/>
        <end position="547"/>
    </location>
</feature>
<feature type="helix" evidence="19">
    <location>
        <begin position="555"/>
        <end position="557"/>
    </location>
</feature>
<feature type="helix" evidence="19">
    <location>
        <begin position="565"/>
        <end position="579"/>
    </location>
</feature>
<feature type="turn" evidence="19">
    <location>
        <begin position="584"/>
        <end position="587"/>
    </location>
</feature>
<feature type="helix" evidence="19">
    <location>
        <begin position="594"/>
        <end position="596"/>
    </location>
</feature>
<feature type="helix" evidence="19">
    <location>
        <begin position="598"/>
        <end position="601"/>
    </location>
</feature>
<feature type="helix" evidence="19">
    <location>
        <begin position="602"/>
        <end position="611"/>
    </location>
</feature>
<feature type="helix" evidence="19">
    <location>
        <begin position="616"/>
        <end position="639"/>
    </location>
</feature>
<feature type="strand" evidence="20">
    <location>
        <begin position="642"/>
        <end position="644"/>
    </location>
</feature>
<feature type="helix" evidence="19">
    <location>
        <begin position="645"/>
        <end position="662"/>
    </location>
</feature>
<feature type="helix" evidence="19">
    <location>
        <begin position="665"/>
        <end position="667"/>
    </location>
</feature>
<feature type="helix" evidence="19">
    <location>
        <begin position="668"/>
        <end position="693"/>
    </location>
</feature>
<feature type="helix" evidence="19">
    <location>
        <begin position="700"/>
        <end position="705"/>
    </location>
</feature>
<feature type="helix" evidence="19">
    <location>
        <begin position="708"/>
        <end position="717"/>
    </location>
</feature>
<feature type="helix" evidence="19">
    <location>
        <begin position="722"/>
        <end position="736"/>
    </location>
</feature>
<feature type="strand" evidence="19">
    <location>
        <begin position="742"/>
        <end position="745"/>
    </location>
</feature>
<feature type="strand" evidence="19">
    <location>
        <begin position="758"/>
        <end position="760"/>
    </location>
</feature>
<feature type="strand" evidence="19">
    <location>
        <begin position="768"/>
        <end position="771"/>
    </location>
</feature>
<feature type="strand" evidence="19">
    <location>
        <begin position="774"/>
        <end position="781"/>
    </location>
</feature>
<feature type="helix" evidence="19">
    <location>
        <begin position="785"/>
        <end position="787"/>
    </location>
</feature>
<feature type="strand" evidence="19">
    <location>
        <begin position="794"/>
        <end position="799"/>
    </location>
</feature>
<feature type="helix" evidence="19">
    <location>
        <begin position="803"/>
        <end position="808"/>
    </location>
</feature>
<feature type="turn" evidence="19">
    <location>
        <begin position="809"/>
        <end position="811"/>
    </location>
</feature>
<feature type="strand" evidence="19">
    <location>
        <begin position="813"/>
        <end position="819"/>
    </location>
</feature>
<feature type="strand" evidence="19">
    <location>
        <begin position="822"/>
        <end position="824"/>
    </location>
</feature>
<feature type="helix" evidence="19">
    <location>
        <begin position="827"/>
        <end position="832"/>
    </location>
</feature>
<feature type="strand" evidence="19">
    <location>
        <begin position="837"/>
        <end position="839"/>
    </location>
</feature>
<feature type="helix" evidence="19">
    <location>
        <begin position="844"/>
        <end position="847"/>
    </location>
</feature>
<feature type="strand" evidence="19">
    <location>
        <begin position="853"/>
        <end position="857"/>
    </location>
</feature>
<feature type="turn" evidence="19">
    <location>
        <begin position="858"/>
        <end position="861"/>
    </location>
</feature>
<feature type="strand" evidence="19">
    <location>
        <begin position="862"/>
        <end position="865"/>
    </location>
</feature>
<protein>
    <recommendedName>
        <fullName evidence="6">Rifampicin phosphotransferase</fullName>
        <ecNumber evidence="1 2 3">2.7.9.6</ecNumber>
    </recommendedName>
    <alternativeName>
        <fullName evidence="5">LmRPH</fullName>
    </alternativeName>
    <alternativeName>
        <fullName evidence="5">Rifampin phosphotransferase</fullName>
        <shortName evidence="4">RIF phosphotransferase</shortName>
    </alternativeName>
</protein>
<proteinExistence type="evidence at protein level"/>
<comment type="function">
    <text evidence="1 2 3">Catalyzes the phosphorylation of rifampicin, also known as rifampin (RIF), leading to its inactivation (PubMed:24778229, PubMed:27001859, PubMed:27103605). Confers high level resistance to a variety of clinically used rifamycin antibiotics (PubMed:24778229). Does not show phosphoenolpyruvate (PEP) synthase activity (PubMed:24778229).</text>
</comment>
<comment type="catalytic activity">
    <reaction evidence="1 2 3">
        <text>rifampicin + ATP + H2O = 21-phosphorifampicin + AMP + phosphate + 2 H(+)</text>
        <dbReference type="Rhea" id="RHEA:56304"/>
        <dbReference type="ChEBI" id="CHEBI:15377"/>
        <dbReference type="ChEBI" id="CHEBI:15378"/>
        <dbReference type="ChEBI" id="CHEBI:30616"/>
        <dbReference type="ChEBI" id="CHEBI:43474"/>
        <dbReference type="ChEBI" id="CHEBI:71365"/>
        <dbReference type="ChEBI" id="CHEBI:140195"/>
        <dbReference type="ChEBI" id="CHEBI:456215"/>
        <dbReference type="EC" id="2.7.9.6"/>
    </reaction>
    <physiologicalReaction direction="left-to-right" evidence="1 2 3">
        <dbReference type="Rhea" id="RHEA:56305"/>
    </physiologicalReaction>
</comment>
<comment type="biophysicochemical properties">
    <kinetics>
        <KM evidence="1">0.27 uM for RIF</KM>
        <KM evidence="3">0.57 uM for RIF</KM>
        <KM evidence="1">27.21 uM for ATP</KM>
        <KM evidence="3">8.38 uM for ATP</KM>
        <text evidence="1 3">kcat is 1.03 sec(-1) (PubMed:24778229). kcat is 2.87 sec(-1) with ATP as substrate. kcat is 2.25 sec(-1) with RIF as substrate (PubMed:27103605).</text>
    </kinetics>
</comment>
<comment type="domain">
    <text evidence="2 3">Contains three domains: an N-terminal ATP-binding domain, a large central rifampicin (RIF)-binding domain and a small C-terminal swivel phosphohistidine domain that harbors the conserved histidine residue essential for phosphate transfer (PubMed:27001859, PubMed:27103605). RIF modification involves a two-stage mechanism: the first reaction, which takes place in the ATP-binding domain, involves attack of the ATP by His-825 of the swivel phosphohistidine domain, forming a pyrophosphorylated histidine residue (PubMed:27001859, PubMed:27103605). This reaction is followed by transit of the swivel phosphohistidine domain to the RIF-binding domain (PubMed:27001859, PubMed:27103605). The second reaction, which takes place in the RIF-binding domain, leads to the formation of the RIF-phosphate product (PubMed:27001859, PubMed:27103605). The C-terminal swivel phosphohistidine domain therefore swings between the ATP-binding domain and the RIF-binding domain to transfer phosphate from ATP to rifampicin (PubMed:27001859, PubMed:27103605). The ATP-binding domain likely undergoes a 'grasping' conformational change onto ATP, which creates a binding surface for the swivel phosphohistidine domain (PubMed:27103605).</text>
</comment>
<comment type="similarity">
    <text evidence="6">Belongs to the rifampicin phosphotransferase family.</text>
</comment>
<name>RPH_LISMF</name>